<comment type="cofactor">
    <cofactor evidence="1">
        <name>Zn(2+)</name>
        <dbReference type="ChEBI" id="CHEBI:29105"/>
    </cofactor>
    <text evidence="1">Binds 1 zinc ion per subunit.</text>
</comment>
<comment type="subcellular location">
    <subcellularLocation>
        <location evidence="1">Cell inner membrane</location>
        <topology evidence="1">Multi-pass membrane protein</topology>
    </subcellularLocation>
</comment>
<comment type="similarity">
    <text evidence="1">Belongs to the peptidase M48B family.</text>
</comment>
<organism>
    <name type="scientific">Agrobacterium fabrum (strain C58 / ATCC 33970)</name>
    <name type="common">Agrobacterium tumefaciens (strain C58)</name>
    <dbReference type="NCBI Taxonomy" id="176299"/>
    <lineage>
        <taxon>Bacteria</taxon>
        <taxon>Pseudomonadati</taxon>
        <taxon>Pseudomonadota</taxon>
        <taxon>Alphaproteobacteria</taxon>
        <taxon>Hyphomicrobiales</taxon>
        <taxon>Rhizobiaceae</taxon>
        <taxon>Rhizobium/Agrobacterium group</taxon>
        <taxon>Agrobacterium</taxon>
        <taxon>Agrobacterium tumefaciens complex</taxon>
    </lineage>
</organism>
<evidence type="ECO:0000255" key="1">
    <source>
        <dbReference type="HAMAP-Rule" id="MF_00188"/>
    </source>
</evidence>
<evidence type="ECO:0000256" key="2">
    <source>
        <dbReference type="SAM" id="MobiDB-lite"/>
    </source>
</evidence>
<keyword id="KW-0997">Cell inner membrane</keyword>
<keyword id="KW-1003">Cell membrane</keyword>
<keyword id="KW-0378">Hydrolase</keyword>
<keyword id="KW-0472">Membrane</keyword>
<keyword id="KW-0479">Metal-binding</keyword>
<keyword id="KW-0482">Metalloprotease</keyword>
<keyword id="KW-0645">Protease</keyword>
<keyword id="KW-1185">Reference proteome</keyword>
<keyword id="KW-0812">Transmembrane</keyword>
<keyword id="KW-1133">Transmembrane helix</keyword>
<keyword id="KW-0862">Zinc</keyword>
<accession>Q8UBM5</accession>
<name>HTPX_AGRFC</name>
<reference key="1">
    <citation type="journal article" date="2001" name="Science">
        <title>The genome of the natural genetic engineer Agrobacterium tumefaciens C58.</title>
        <authorList>
            <person name="Wood D.W."/>
            <person name="Setubal J.C."/>
            <person name="Kaul R."/>
            <person name="Monks D.E."/>
            <person name="Kitajima J.P."/>
            <person name="Okura V.K."/>
            <person name="Zhou Y."/>
            <person name="Chen L."/>
            <person name="Wood G.E."/>
            <person name="Almeida N.F. Jr."/>
            <person name="Woo L."/>
            <person name="Chen Y."/>
            <person name="Paulsen I.T."/>
            <person name="Eisen J.A."/>
            <person name="Karp P.D."/>
            <person name="Bovee D. Sr."/>
            <person name="Chapman P."/>
            <person name="Clendenning J."/>
            <person name="Deatherage G."/>
            <person name="Gillet W."/>
            <person name="Grant C."/>
            <person name="Kutyavin T."/>
            <person name="Levy R."/>
            <person name="Li M.-J."/>
            <person name="McClelland E."/>
            <person name="Palmieri A."/>
            <person name="Raymond C."/>
            <person name="Rouse G."/>
            <person name="Saenphimmachak C."/>
            <person name="Wu Z."/>
            <person name="Romero P."/>
            <person name="Gordon D."/>
            <person name="Zhang S."/>
            <person name="Yoo H."/>
            <person name="Tao Y."/>
            <person name="Biddle P."/>
            <person name="Jung M."/>
            <person name="Krespan W."/>
            <person name="Perry M."/>
            <person name="Gordon-Kamm B."/>
            <person name="Liao L."/>
            <person name="Kim S."/>
            <person name="Hendrick C."/>
            <person name="Zhao Z.-Y."/>
            <person name="Dolan M."/>
            <person name="Chumley F."/>
            <person name="Tingey S.V."/>
            <person name="Tomb J.-F."/>
            <person name="Gordon M.P."/>
            <person name="Olson M.V."/>
            <person name="Nester E.W."/>
        </authorList>
    </citation>
    <scope>NUCLEOTIDE SEQUENCE [LARGE SCALE GENOMIC DNA]</scope>
    <source>
        <strain>C58 / ATCC 33970</strain>
    </source>
</reference>
<reference key="2">
    <citation type="journal article" date="2001" name="Science">
        <title>Genome sequence of the plant pathogen and biotechnology agent Agrobacterium tumefaciens C58.</title>
        <authorList>
            <person name="Goodner B."/>
            <person name="Hinkle G."/>
            <person name="Gattung S."/>
            <person name="Miller N."/>
            <person name="Blanchard M."/>
            <person name="Qurollo B."/>
            <person name="Goldman B.S."/>
            <person name="Cao Y."/>
            <person name="Askenazi M."/>
            <person name="Halling C."/>
            <person name="Mullin L."/>
            <person name="Houmiel K."/>
            <person name="Gordon J."/>
            <person name="Vaudin M."/>
            <person name="Iartchouk O."/>
            <person name="Epp A."/>
            <person name="Liu F."/>
            <person name="Wollam C."/>
            <person name="Allinger M."/>
            <person name="Doughty D."/>
            <person name="Scott C."/>
            <person name="Lappas C."/>
            <person name="Markelz B."/>
            <person name="Flanagan C."/>
            <person name="Crowell C."/>
            <person name="Gurson J."/>
            <person name="Lomo C."/>
            <person name="Sear C."/>
            <person name="Strub G."/>
            <person name="Cielo C."/>
            <person name="Slater S."/>
        </authorList>
    </citation>
    <scope>NUCLEOTIDE SEQUENCE [LARGE SCALE GENOMIC DNA]</scope>
    <source>
        <strain>C58 / ATCC 33970</strain>
    </source>
</reference>
<feature type="chain" id="PRO_0000138848" description="Protease HtpX homolog">
    <location>
        <begin position="1"/>
        <end position="321"/>
    </location>
</feature>
<feature type="transmembrane region" description="Helical" evidence="1">
    <location>
        <begin position="6"/>
        <end position="26"/>
    </location>
</feature>
<feature type="transmembrane region" description="Helical" evidence="1">
    <location>
        <begin position="28"/>
        <end position="48"/>
    </location>
</feature>
<feature type="transmembrane region" description="Helical" evidence="1">
    <location>
        <begin position="145"/>
        <end position="165"/>
    </location>
</feature>
<feature type="transmembrane region" description="Helical" evidence="1">
    <location>
        <begin position="173"/>
        <end position="193"/>
    </location>
</feature>
<feature type="region of interest" description="Disordered" evidence="2">
    <location>
        <begin position="281"/>
        <end position="321"/>
    </location>
</feature>
<feature type="compositionally biased region" description="Basic and acidic residues" evidence="2">
    <location>
        <begin position="310"/>
        <end position="321"/>
    </location>
</feature>
<feature type="active site" evidence="1">
    <location>
        <position position="131"/>
    </location>
</feature>
<feature type="binding site" evidence="1">
    <location>
        <position position="130"/>
    </location>
    <ligand>
        <name>Zn(2+)</name>
        <dbReference type="ChEBI" id="CHEBI:29105"/>
        <note>catalytic</note>
    </ligand>
</feature>
<feature type="binding site" evidence="1">
    <location>
        <position position="134"/>
    </location>
    <ligand>
        <name>Zn(2+)</name>
        <dbReference type="ChEBI" id="CHEBI:29105"/>
        <note>catalytic</note>
    </ligand>
</feature>
<feature type="binding site" evidence="1">
    <location>
        <position position="202"/>
    </location>
    <ligand>
        <name>Zn(2+)</name>
        <dbReference type="ChEBI" id="CHEBI:29105"/>
        <note>catalytic</note>
    </ligand>
</feature>
<proteinExistence type="inferred from homology"/>
<protein>
    <recommendedName>
        <fullName evidence="1">Protease HtpX homolog</fullName>
        <ecNumber evidence="1">3.4.24.-</ecNumber>
    </recommendedName>
</protein>
<sequence length="321" mass="34932">MNMMRTAMLLAFMTALFMGVGFLIGGKGGMMIALLIAAGMNLFSYWNSDKMVLSAYRAREIDEANAPEFFHMIRDLSQNAGLPMPKVYIYDSPQPNAFATGRNPENAAVAASTGLLERLTPEEVAGVMAHELAHVQNRDTLTMTITATLAGAISMLGNFAFFFGGNRENNNNPLGFIGVLVAMIVAPLAAMLVQMAISRTREYSADRRGAEICGNPLWLASALQKISGMAQQIHNDDAERNPATAHMFIINPLSGERMDNLFSTHPNTENRVAALHAMAQEFSPRASTPPPSGDRPVRKSGSVPTTGWRRGNENERKGPWS</sequence>
<dbReference type="EC" id="3.4.24.-" evidence="1"/>
<dbReference type="EMBL" id="AE007869">
    <property type="protein sequence ID" value="AAK88538.1"/>
    <property type="molecule type" value="Genomic_DNA"/>
</dbReference>
<dbReference type="PIR" id="A97698">
    <property type="entry name" value="A97698"/>
</dbReference>
<dbReference type="PIR" id="AI2923">
    <property type="entry name" value="AI2923"/>
</dbReference>
<dbReference type="RefSeq" id="NP_355753.1">
    <property type="nucleotide sequence ID" value="NC_003062.2"/>
</dbReference>
<dbReference type="RefSeq" id="WP_010972595.1">
    <property type="nucleotide sequence ID" value="NC_003062.2"/>
</dbReference>
<dbReference type="STRING" id="176299.Atu2826"/>
<dbReference type="EnsemblBacteria" id="AAK88538">
    <property type="protein sequence ID" value="AAK88538"/>
    <property type="gene ID" value="Atu2826"/>
</dbReference>
<dbReference type="GeneID" id="1134864"/>
<dbReference type="KEGG" id="atu:Atu2826"/>
<dbReference type="PATRIC" id="fig|176299.10.peg.2835"/>
<dbReference type="eggNOG" id="COG0501">
    <property type="taxonomic scope" value="Bacteria"/>
</dbReference>
<dbReference type="HOGENOM" id="CLU_042266_3_0_5"/>
<dbReference type="OrthoDB" id="15218at2"/>
<dbReference type="PhylomeDB" id="Q8UBM5"/>
<dbReference type="BioCyc" id="AGRO:ATU2826-MONOMER"/>
<dbReference type="Proteomes" id="UP000000813">
    <property type="component" value="Chromosome circular"/>
</dbReference>
<dbReference type="GO" id="GO:0005886">
    <property type="term" value="C:plasma membrane"/>
    <property type="evidence" value="ECO:0007669"/>
    <property type="project" value="UniProtKB-SubCell"/>
</dbReference>
<dbReference type="GO" id="GO:0004222">
    <property type="term" value="F:metalloendopeptidase activity"/>
    <property type="evidence" value="ECO:0007669"/>
    <property type="project" value="UniProtKB-UniRule"/>
</dbReference>
<dbReference type="GO" id="GO:0008270">
    <property type="term" value="F:zinc ion binding"/>
    <property type="evidence" value="ECO:0007669"/>
    <property type="project" value="UniProtKB-UniRule"/>
</dbReference>
<dbReference type="GO" id="GO:0006508">
    <property type="term" value="P:proteolysis"/>
    <property type="evidence" value="ECO:0007669"/>
    <property type="project" value="UniProtKB-KW"/>
</dbReference>
<dbReference type="CDD" id="cd07336">
    <property type="entry name" value="M48B_HtpX_like"/>
    <property type="match status" value="1"/>
</dbReference>
<dbReference type="Gene3D" id="3.30.2010.10">
    <property type="entry name" value="Metalloproteases ('zincins'), catalytic domain"/>
    <property type="match status" value="1"/>
</dbReference>
<dbReference type="HAMAP" id="MF_00188">
    <property type="entry name" value="Pept_M48_protease_HtpX"/>
    <property type="match status" value="1"/>
</dbReference>
<dbReference type="InterPro" id="IPR050083">
    <property type="entry name" value="HtpX_protease"/>
</dbReference>
<dbReference type="InterPro" id="IPR022919">
    <property type="entry name" value="Pept_M48_protease_HtpX"/>
</dbReference>
<dbReference type="InterPro" id="IPR001915">
    <property type="entry name" value="Peptidase_M48"/>
</dbReference>
<dbReference type="NCBIfam" id="NF002363">
    <property type="entry name" value="PRK01345.1"/>
    <property type="match status" value="1"/>
</dbReference>
<dbReference type="NCBIfam" id="NF002826">
    <property type="entry name" value="PRK03001.1"/>
    <property type="match status" value="1"/>
</dbReference>
<dbReference type="PANTHER" id="PTHR43221">
    <property type="entry name" value="PROTEASE HTPX"/>
    <property type="match status" value="1"/>
</dbReference>
<dbReference type="PANTHER" id="PTHR43221:SF1">
    <property type="entry name" value="PROTEASE HTPX"/>
    <property type="match status" value="1"/>
</dbReference>
<dbReference type="Pfam" id="PF01435">
    <property type="entry name" value="Peptidase_M48"/>
    <property type="match status" value="1"/>
</dbReference>
<dbReference type="PROSITE" id="PS00142">
    <property type="entry name" value="ZINC_PROTEASE"/>
    <property type="match status" value="1"/>
</dbReference>
<gene>
    <name evidence="1" type="primary">htpX</name>
    <name type="ordered locus">Atu2826</name>
    <name type="ORF">AGR_C_5123</name>
</gene>